<gene>
    <name evidence="1" type="primary">mtrA</name>
    <name type="ordered locus">Mbar_A1258</name>
</gene>
<keyword id="KW-1003">Cell membrane</keyword>
<keyword id="KW-0170">Cobalt</keyword>
<keyword id="KW-0472">Membrane</keyword>
<keyword id="KW-0484">Methanogenesis</keyword>
<keyword id="KW-0489">Methyltransferase</keyword>
<keyword id="KW-0554">One-carbon metabolism</keyword>
<keyword id="KW-0808">Transferase</keyword>
<keyword id="KW-1278">Translocase</keyword>
<keyword id="KW-0812">Transmembrane</keyword>
<keyword id="KW-1133">Transmembrane helix</keyword>
<feature type="chain" id="PRO_0000147502" description="Tetrahydromethanopterin S-methyltransferase subunit A">
    <location>
        <begin position="1"/>
        <end position="240"/>
    </location>
</feature>
<feature type="topological domain" description="Cytoplasmic" evidence="1">
    <location>
        <begin position="1"/>
        <end position="218"/>
    </location>
</feature>
<feature type="transmembrane region" description="Helical" evidence="1">
    <location>
        <begin position="219"/>
        <end position="239"/>
    </location>
</feature>
<feature type="topological domain" description="Extracellular" evidence="1">
    <location>
        <position position="240"/>
    </location>
</feature>
<feature type="binding site" evidence="1">
    <location>
        <position position="85"/>
    </location>
    <ligand>
        <name>5-hydroxybenzimidazolylcob(I)amide</name>
        <dbReference type="ChEBI" id="CHEBI:60494"/>
        <note>cofactor</note>
    </ligand>
</feature>
<name>MTRA_METBF</name>
<accession>Q9Y8K4</accession>
<accession>Q46D21</accession>
<proteinExistence type="inferred from homology"/>
<dbReference type="EC" id="7.2.1.4" evidence="1"/>
<dbReference type="EMBL" id="AJ132817">
    <property type="protein sequence ID" value="CAB41642.1"/>
    <property type="molecule type" value="Genomic_DNA"/>
</dbReference>
<dbReference type="EMBL" id="CP000099">
    <property type="protein sequence ID" value="AAZ70221.1"/>
    <property type="molecule type" value="Genomic_DNA"/>
</dbReference>
<dbReference type="SMR" id="Q9Y8K4"/>
<dbReference type="STRING" id="269797.Mbar_A1258"/>
<dbReference type="PaxDb" id="269797-Mbar_A1258"/>
<dbReference type="GeneID" id="24825090"/>
<dbReference type="KEGG" id="mba:Mbar_A1258"/>
<dbReference type="eggNOG" id="arCOG03221">
    <property type="taxonomic scope" value="Archaea"/>
</dbReference>
<dbReference type="HOGENOM" id="CLU_100863_0_0_2"/>
<dbReference type="OrthoDB" id="130682at2157"/>
<dbReference type="UniPathway" id="UPA00640">
    <property type="reaction ID" value="UER00698"/>
</dbReference>
<dbReference type="GO" id="GO:0005886">
    <property type="term" value="C:plasma membrane"/>
    <property type="evidence" value="ECO:0007669"/>
    <property type="project" value="UniProtKB-SubCell"/>
</dbReference>
<dbReference type="GO" id="GO:0050897">
    <property type="term" value="F:cobalt ion binding"/>
    <property type="evidence" value="ECO:0007669"/>
    <property type="project" value="InterPro"/>
</dbReference>
<dbReference type="GO" id="GO:0030269">
    <property type="term" value="F:tetrahydromethanopterin S-methyltransferase activity"/>
    <property type="evidence" value="ECO:0007669"/>
    <property type="project" value="UniProtKB-UniRule"/>
</dbReference>
<dbReference type="GO" id="GO:0019386">
    <property type="term" value="P:methanogenesis, from carbon dioxide"/>
    <property type="evidence" value="ECO:0007669"/>
    <property type="project" value="UniProtKB-UniRule"/>
</dbReference>
<dbReference type="GO" id="GO:0032259">
    <property type="term" value="P:methylation"/>
    <property type="evidence" value="ECO:0007669"/>
    <property type="project" value="UniProtKB-KW"/>
</dbReference>
<dbReference type="GO" id="GO:0006730">
    <property type="term" value="P:one-carbon metabolic process"/>
    <property type="evidence" value="ECO:0007669"/>
    <property type="project" value="UniProtKB-UniRule"/>
</dbReference>
<dbReference type="HAMAP" id="MF_01093">
    <property type="entry name" value="MtrA"/>
    <property type="match status" value="1"/>
</dbReference>
<dbReference type="InterPro" id="IPR030688">
    <property type="entry name" value="MeTrfase_MtrA/MtxA"/>
</dbReference>
<dbReference type="InterPro" id="IPR005778">
    <property type="entry name" value="MtrA"/>
</dbReference>
<dbReference type="NCBIfam" id="TIGR01111">
    <property type="entry name" value="mtrA"/>
    <property type="match status" value="1"/>
</dbReference>
<dbReference type="NCBIfam" id="NF002126">
    <property type="entry name" value="PRK00964.1-4"/>
    <property type="match status" value="1"/>
</dbReference>
<dbReference type="Pfam" id="PF04208">
    <property type="entry name" value="MtrA"/>
    <property type="match status" value="1"/>
</dbReference>
<dbReference type="PIRSF" id="PIRSF500207">
    <property type="entry name" value="MtrA"/>
    <property type="match status" value="1"/>
</dbReference>
<dbReference type="PIRSF" id="PIRSF009452">
    <property type="entry name" value="MtrA_MtxA"/>
    <property type="match status" value="1"/>
</dbReference>
<organism>
    <name type="scientific">Methanosarcina barkeri (strain Fusaro / DSM 804)</name>
    <dbReference type="NCBI Taxonomy" id="269797"/>
    <lineage>
        <taxon>Archaea</taxon>
        <taxon>Methanobacteriati</taxon>
        <taxon>Methanobacteriota</taxon>
        <taxon>Stenosarchaea group</taxon>
        <taxon>Methanomicrobia</taxon>
        <taxon>Methanosarcinales</taxon>
        <taxon>Methanosarcinaceae</taxon>
        <taxon>Methanosarcina</taxon>
    </lineage>
</organism>
<protein>
    <recommendedName>
        <fullName evidence="1">Tetrahydromethanopterin S-methyltransferase subunit A</fullName>
        <ecNumber evidence="1">7.2.1.4</ecNumber>
    </recommendedName>
    <alternativeName>
        <fullName evidence="1">N5-methyltetrahydromethanopterin--coenzyme M methyltransferase subunit A</fullName>
    </alternativeName>
</protein>
<comment type="function">
    <text evidence="1">Part of a complex that catalyzes the formation of methyl-coenzyme M and tetrahydromethanopterin from coenzyme M and methyl-tetrahydromethanopterin. This is an energy-conserving, sodium-ion translocating step.</text>
</comment>
<comment type="catalytic activity">
    <reaction evidence="1">
        <text>5-methyl-5,6,7,8-tetrahydromethanopterin + coenzyme M + 2 Na(+)(in) = 5,6,7,8-tetrahydromethanopterin + methyl-coenzyme M + 2 Na(+)(out)</text>
        <dbReference type="Rhea" id="RHEA:53492"/>
        <dbReference type="ChEBI" id="CHEBI:29101"/>
        <dbReference type="ChEBI" id="CHEBI:58103"/>
        <dbReference type="ChEBI" id="CHEBI:58116"/>
        <dbReference type="ChEBI" id="CHEBI:58286"/>
        <dbReference type="ChEBI" id="CHEBI:58319"/>
        <dbReference type="EC" id="7.2.1.4"/>
    </reaction>
</comment>
<comment type="cofactor">
    <cofactor evidence="1">
        <name>5-hydroxybenzimidazolylcob(I)amide</name>
        <dbReference type="ChEBI" id="CHEBI:60494"/>
    </cofactor>
    <text evidence="1">Binds 1 5-hydroxybenzimidazolylcobamide group.</text>
</comment>
<comment type="pathway">
    <text evidence="1">One-carbon metabolism; methanogenesis from CO(2); methyl-coenzyme M from 5,10-methylene-5,6,7,8-tetrahydromethanopterin: step 2/2.</text>
</comment>
<comment type="subunit">
    <text evidence="1">The complex is composed of 8 subunits; MtrA, MtrB, MtrC, MtrD, MtrE, MtrF, MtrG and MtrH.</text>
</comment>
<comment type="subcellular location">
    <subcellularLocation>
        <location evidence="1">Cell membrane</location>
        <topology evidence="1">Single-pass membrane protein</topology>
    </subcellularLocation>
</comment>
<comment type="similarity">
    <text evidence="1">Belongs to the MtrA family.</text>
</comment>
<evidence type="ECO:0000255" key="1">
    <source>
        <dbReference type="HAMAP-Rule" id="MF_01093"/>
    </source>
</evidence>
<sequence length="240" mass="25413">MADKKEPAPGWPILKGEYEVGDVKNCVLVITCGSHLPGQPILDAGAAVTGSCKTENLGIEKVVAHIISNPNIRYLLVTGSEVKGHITGQSVMSLHANGVKDNRISGALGAIPYVENLNEDAIARFQEQVDVVNLLDTEDMGAITSKVKELASKDPGAFDAEPMIVEISEEGEEEEEGGAVRPVSGEIAVIRSRLKAIEARMMDIGNLNKFHSGVHAGKIEGAMIGLTVTISLLGLLLLGR</sequence>
<reference key="1">
    <citation type="journal article" date="1999" name="FEBS Lett.">
        <title>The energy conserving methyltetrahydromethanopterin:coenzyme M methyltransferase complex from methanogenic archaea: function of the subunit MtrH.</title>
        <authorList>
            <person name="Hippler B."/>
            <person name="Thauer R.K."/>
        </authorList>
    </citation>
    <scope>NUCLEOTIDE SEQUENCE [GENOMIC DNA]</scope>
</reference>
<reference key="2">
    <citation type="journal article" date="2006" name="J. Bacteriol.">
        <title>The Methanosarcina barkeri genome: comparative analysis with Methanosarcina acetivorans and Methanosarcina mazei reveals extensive rearrangement within methanosarcinal genomes.</title>
        <authorList>
            <person name="Maeder D.L."/>
            <person name="Anderson I."/>
            <person name="Brettin T.S."/>
            <person name="Bruce D.C."/>
            <person name="Gilna P."/>
            <person name="Han C.S."/>
            <person name="Lapidus A."/>
            <person name="Metcalf W.W."/>
            <person name="Saunders E."/>
            <person name="Tapia R."/>
            <person name="Sowers K.R."/>
        </authorList>
    </citation>
    <scope>NUCLEOTIDE SEQUENCE [LARGE SCALE GENOMIC DNA]</scope>
    <source>
        <strain>Fusaro / DSM 804</strain>
    </source>
</reference>